<reference key="1">
    <citation type="submission" date="2006-12" db="EMBL/GenBank/DDBJ databases">
        <title>NISC comparative sequencing initiative.</title>
        <authorList>
            <person name="Antonellis A."/>
            <person name="Ayele K."/>
            <person name="Benjamin B."/>
            <person name="Blakesley R.W."/>
            <person name="Boakye A."/>
            <person name="Bouffard G.G."/>
            <person name="Brinkley C."/>
            <person name="Brooks S."/>
            <person name="Chu G."/>
            <person name="Coleman H."/>
            <person name="Engle J."/>
            <person name="Gestole M."/>
            <person name="Greene A."/>
            <person name="Guan X."/>
            <person name="Gupta J."/>
            <person name="Haghighi P."/>
            <person name="Han J."/>
            <person name="Hansen N."/>
            <person name="Ho S.-L."/>
            <person name="Hu P."/>
            <person name="Hunter G."/>
            <person name="Hurle B."/>
            <person name="Idol J.R."/>
            <person name="Kwong P."/>
            <person name="Laric P."/>
            <person name="Larson S."/>
            <person name="Lee-Lin S.-Q."/>
            <person name="Legaspi R."/>
            <person name="Madden M."/>
            <person name="Maduro Q.L."/>
            <person name="Maduro V.B."/>
            <person name="Margulies E.H."/>
            <person name="Masiello C."/>
            <person name="Maskeri B."/>
            <person name="McDowell J."/>
            <person name="Mojidi H.A."/>
            <person name="Mullikin J.C."/>
            <person name="Oestreicher J.S."/>
            <person name="Park M."/>
            <person name="Portnoy M.E."/>
            <person name="Prasad A."/>
            <person name="Puri O."/>
            <person name="Reddix-Dugue N."/>
            <person name="Schandler K."/>
            <person name="Schueler M.G."/>
            <person name="Sison C."/>
            <person name="Stantripop S."/>
            <person name="Stephen E."/>
            <person name="Taye A."/>
            <person name="Thomas J.W."/>
            <person name="Thomas P.J."/>
            <person name="Tsipouri V."/>
            <person name="Ung L."/>
            <person name="Vogt J.L."/>
            <person name="Wetherby K.D."/>
            <person name="Young A."/>
            <person name="Green E.D."/>
        </authorList>
    </citation>
    <scope>NUCLEOTIDE SEQUENCE [LARGE SCALE GENOMIC DNA]</scope>
</reference>
<protein>
    <recommendedName>
        <fullName>Cortactin-binding protein 2</fullName>
        <shortName>CortBP2</shortName>
    </recommendedName>
</protein>
<keyword id="KW-0040">ANK repeat</keyword>
<keyword id="KW-0966">Cell projection</keyword>
<keyword id="KW-0175">Coiled coil</keyword>
<keyword id="KW-0963">Cytoplasm</keyword>
<keyword id="KW-0488">Methylation</keyword>
<keyword id="KW-0597">Phosphoprotein</keyword>
<keyword id="KW-0677">Repeat</keyword>
<keyword id="KW-0770">Synapse</keyword>
<name>CTTB2_ECHTE</name>
<dbReference type="EMBL" id="DP000274">
    <property type="protein sequence ID" value="ABL76173.1"/>
    <property type="molecule type" value="Genomic_DNA"/>
</dbReference>
<dbReference type="SMR" id="A1X157"/>
<dbReference type="Proteomes" id="UP000694863">
    <property type="component" value="Unplaced"/>
</dbReference>
<dbReference type="GO" id="GO:0015629">
    <property type="term" value="C:actin cytoskeleton"/>
    <property type="evidence" value="ECO:0007669"/>
    <property type="project" value="TreeGrafter"/>
</dbReference>
<dbReference type="GO" id="GO:0005938">
    <property type="term" value="C:cell cortex"/>
    <property type="evidence" value="ECO:0007669"/>
    <property type="project" value="UniProtKB-SubCell"/>
</dbReference>
<dbReference type="GO" id="GO:0043197">
    <property type="term" value="C:dendritic spine"/>
    <property type="evidence" value="ECO:0000250"/>
    <property type="project" value="UniProtKB"/>
</dbReference>
<dbReference type="GO" id="GO:0090443">
    <property type="term" value="C:FAR/SIN/STRIPAK complex"/>
    <property type="evidence" value="ECO:0000250"/>
    <property type="project" value="UniProtKB"/>
</dbReference>
<dbReference type="GO" id="GO:0051721">
    <property type="term" value="F:protein phosphatase 2A binding"/>
    <property type="evidence" value="ECO:0007669"/>
    <property type="project" value="TreeGrafter"/>
</dbReference>
<dbReference type="CDD" id="cd14686">
    <property type="entry name" value="bZIP"/>
    <property type="match status" value="1"/>
</dbReference>
<dbReference type="Gene3D" id="1.25.40.20">
    <property type="entry name" value="Ankyrin repeat-containing domain"/>
    <property type="match status" value="1"/>
</dbReference>
<dbReference type="InterPro" id="IPR002110">
    <property type="entry name" value="Ankyrin_rpt"/>
</dbReference>
<dbReference type="InterPro" id="IPR036770">
    <property type="entry name" value="Ankyrin_rpt-contain_sf"/>
</dbReference>
<dbReference type="InterPro" id="IPR050719">
    <property type="entry name" value="Cortactin-Actin_Reg"/>
</dbReference>
<dbReference type="InterPro" id="IPR019131">
    <property type="entry name" value="Cortactin-binding_p2_N"/>
</dbReference>
<dbReference type="PANTHER" id="PTHR23166:SF9">
    <property type="entry name" value="CTTNBP2 N-TERMINAL-LIKE PROTEIN"/>
    <property type="match status" value="1"/>
</dbReference>
<dbReference type="PANTHER" id="PTHR23166">
    <property type="entry name" value="FILAMIN/GPBP-INTERACTING PROTEIN"/>
    <property type="match status" value="1"/>
</dbReference>
<dbReference type="Pfam" id="PF25408">
    <property type="entry name" value="AAA_lid_NAV1"/>
    <property type="match status" value="1"/>
</dbReference>
<dbReference type="Pfam" id="PF00023">
    <property type="entry name" value="Ank"/>
    <property type="match status" value="2"/>
</dbReference>
<dbReference type="Pfam" id="PF12796">
    <property type="entry name" value="Ank_2"/>
    <property type="match status" value="1"/>
</dbReference>
<dbReference type="Pfam" id="PF09727">
    <property type="entry name" value="CortBP2"/>
    <property type="match status" value="1"/>
</dbReference>
<dbReference type="SMART" id="SM00248">
    <property type="entry name" value="ANK"/>
    <property type="match status" value="6"/>
</dbReference>
<dbReference type="SUPFAM" id="SSF48403">
    <property type="entry name" value="Ankyrin repeat"/>
    <property type="match status" value="1"/>
</dbReference>
<dbReference type="PROSITE" id="PS50297">
    <property type="entry name" value="ANK_REP_REGION"/>
    <property type="match status" value="1"/>
</dbReference>
<dbReference type="PROSITE" id="PS50088">
    <property type="entry name" value="ANK_REPEAT"/>
    <property type="match status" value="4"/>
</dbReference>
<sequence length="1666" mass="180275">MATDGASCEPDFARAPEDAAGAPAEAARKEFDVDTLSKSELRMLLSVMEGELEARDLVIEALRARRKEVFIQERYGRFNLNDPFLALQRDYEAGAGDKEKKPVCTNPLSILEAVMAHCRKMQERMSTQLAAAESRQKKLEMEKLQLQTLEQEHKTLAARLEEERVKNKHVVLMLVKECKQLSGKVIEEAQKVEEALAQLEEEKKRASGLEEELSGEKRRSAEMEAQMEKQLSEFDTEREQLRAKLSREEAHTTDLKGEIDKMKKMTEQLKRGNDSKPSLSLPRKAKDRRWVSVSVGTEGPGTGSVACQTDLGVESTDHVKKLPLTVPAKPAAGSPLVAASAKGSGGATAPLARPGVDRQASHADLIVSSPPTIPPPNTNKIEENGPSTSSGPDTPSSTAPLPSNAAPPAIQTPNAAAQNYPAQAPSTHTVHSPCANAALHPALTPRVQAVRFRFQGNANNDQDQNGNNTQSPPSRDVSPTSRDNLVAKQLARNTVTQALSRFTSPQAGAPPRPGAPPTGEGSTHPPVGRTSLKTPGAARVDRGNPPPIPPKKPGLSQTPSPPHPQLKVLLDSSRASNAGPKVDHKTVALPPTSVPQGNRVINEESLPKSSSPQLPPKPSIDLTVAPAGCAVSALATSQVGAWRAETPGLKPPACSDRPLVIPTTIAFRCPINPVSASSCRPGASDSLLVTASGWSPSLTPLLMSGGPAPLAGRPTLLQQAAAQGNVTLLSMLLNEEGLDINHSCEDGHSALYSAAKNGHTDCVRLLLNAEAQVNAADNDGFTPVCAAAAQGHVKCVELLVAYHANINHAAAEGQTPLYLACKNGNKECIKLLLEAGTDRSVKTRDGWTPVHAAVDTGSVDGLKLLLYHRAPACGDGLDTEASRLGVFDLDEGEANPESTPTPVIPADLINHANREGWTAAHIAASKGFKNCLKILCRHGGLEPERKDKCNRTVHDVATDDCKHLLENWNALKIPLRISVGETQGDNSGPDEFESEHTICALNIRKPTSWDDFSKAVSQALTSHFQAISSDGWWSLEDVTLNSPAEASIGLSATSVLSITLGNVPWSVGQSFTQSPWDFLRKHQAEQVTVLLSGPQEGCLSSVTYASMIPLPVLQNYLRLVEQYHTVIFHGPEGSLQDYIALQLALCMKHRQAAVGFSCDIVRADVDAGFSKEQLVDLFIKSACLIPAKQSPASKKTIIILENLERASLSELLGDFLAPLENRSPESPYTFHKGNGTSECYYFHENCFLVGTIAKACLQGPDLLVQQHFRWVQLRWDGEPMQGLLQRFLRRKVVNKFRGKLPSPGEPVCKMVDWALSVWRQLNSCLSHLGTPEALLGPKCFLSCPVVPGHAQATVKWMSKLWNAVIAPRVQDAILSRASVNRQPGLGQTAAKKHPSPGQQAVVKAALSILLHKAVLHGCPLPRAELDQSMADFKGGSFPLSLVSSYSSCSKKKGENGAWRKVSTSPRKKSGWFFSPTWSKPDLSDEGIKSKTISQPNCNRNASLSRQKCLENDLSLALNLDQRLSLGSDDEADLVKELQSMCSSKSESDISKIADTRDDLRRFDSSRNRPAPSATVTNPRMPVSQKEVSPLSSHQTMERSNRTLKTELGVSRVKSFLPVPRSKITQCSQNTKRSSSSSNTRQIEINNNSKDEIWNLRNNEQIEKPNQ</sequence>
<accession>A1X157</accession>
<organism>
    <name type="scientific">Echinops telfairi</name>
    <name type="common">Lesser hedgehog tenrec</name>
    <dbReference type="NCBI Taxonomy" id="9371"/>
    <lineage>
        <taxon>Eukaryota</taxon>
        <taxon>Metazoa</taxon>
        <taxon>Chordata</taxon>
        <taxon>Craniata</taxon>
        <taxon>Vertebrata</taxon>
        <taxon>Euteleostomi</taxon>
        <taxon>Mammalia</taxon>
        <taxon>Eutheria</taxon>
        <taxon>Afrotheria</taxon>
        <taxon>Tenrecidae</taxon>
        <taxon>Tenrecinae</taxon>
        <taxon>Echinops</taxon>
    </lineage>
</organism>
<comment type="function">
    <text evidence="2">Regulates the dendritic spine distribution of CTTN/cortactin in hippocampal neurons, and thus controls dendritic spinogenesis and dendritic spine maintenance. Associates with the striatin-interacting phosphatase and kinase (STRIPAK) core complex to regulate dendritic spine distribution of the STRIPAK complex in hippocampal neurons.</text>
</comment>
<comment type="subunit">
    <text evidence="2">Interacts with CTTN/cortactin SH3 domain. Interacts with STRN, STRN4/zinedin and MOB4/phocein; this interactions mediate the association with the STRIPAK core complex and may regulate dendritic spine distribution of the STRIPAK complex in hippocampal neurons. Activation of glutamate receptors weakens the interaction with STRN and STRN4.</text>
</comment>
<comment type="subcellular location">
    <subcellularLocation>
        <location evidence="1">Cytoplasm</location>
        <location evidence="1">Cell cortex</location>
    </subcellularLocation>
    <subcellularLocation>
        <location evidence="2">Cell projection</location>
        <location evidence="2">Dendritic spine</location>
    </subcellularLocation>
    <text evidence="2">Remains associated with dendritic spines even after glutamate stimulation.</text>
</comment>
<evidence type="ECO:0000250" key="1">
    <source>
        <dbReference type="UniProtKB" id="B9EJA2"/>
    </source>
</evidence>
<evidence type="ECO:0000250" key="2">
    <source>
        <dbReference type="UniProtKB" id="Q2IBD4"/>
    </source>
</evidence>
<evidence type="ECO:0000250" key="3">
    <source>
        <dbReference type="UniProtKB" id="Q8WZ74"/>
    </source>
</evidence>
<evidence type="ECO:0000255" key="4"/>
<evidence type="ECO:0000256" key="5">
    <source>
        <dbReference type="SAM" id="MobiDB-lite"/>
    </source>
</evidence>
<proteinExistence type="inferred from homology"/>
<feature type="chain" id="PRO_0000279860" description="Cortactin-binding protein 2">
    <location>
        <begin position="1"/>
        <end position="1666"/>
    </location>
</feature>
<feature type="repeat" description="ANK 1">
    <location>
        <begin position="712"/>
        <end position="742"/>
    </location>
</feature>
<feature type="repeat" description="ANK 2">
    <location>
        <begin position="746"/>
        <end position="775"/>
    </location>
</feature>
<feature type="repeat" description="ANK 3">
    <location>
        <begin position="779"/>
        <end position="808"/>
    </location>
</feature>
<feature type="repeat" description="ANK 4">
    <location>
        <begin position="812"/>
        <end position="841"/>
    </location>
</feature>
<feature type="repeat" description="ANK 5">
    <location>
        <begin position="845"/>
        <end position="874"/>
    </location>
</feature>
<feature type="repeat" description="ANK 6">
    <location>
        <begin position="915"/>
        <end position="945"/>
    </location>
</feature>
<feature type="region of interest" description="Disordered" evidence="5">
    <location>
        <begin position="1"/>
        <end position="25"/>
    </location>
</feature>
<feature type="region of interest" description="Disordered" evidence="5">
    <location>
        <begin position="202"/>
        <end position="224"/>
    </location>
</feature>
<feature type="region of interest" description="Disordered" evidence="5">
    <location>
        <begin position="366"/>
        <end position="411"/>
    </location>
</feature>
<feature type="region of interest" description="Disordered" evidence="5">
    <location>
        <begin position="457"/>
        <end position="481"/>
    </location>
</feature>
<feature type="region of interest" description="Disordered" evidence="5">
    <location>
        <begin position="501"/>
        <end position="619"/>
    </location>
</feature>
<feature type="region of interest" description="Disordered" evidence="5">
    <location>
        <begin position="1545"/>
        <end position="1601"/>
    </location>
</feature>
<feature type="region of interest" description="Disordered" evidence="5">
    <location>
        <begin position="1620"/>
        <end position="1666"/>
    </location>
</feature>
<feature type="coiled-coil region" evidence="4">
    <location>
        <begin position="120"/>
        <end position="274"/>
    </location>
</feature>
<feature type="compositionally biased region" description="Low complexity" evidence="5">
    <location>
        <begin position="385"/>
        <end position="398"/>
    </location>
</feature>
<feature type="compositionally biased region" description="Low complexity" evidence="5">
    <location>
        <begin position="457"/>
        <end position="468"/>
    </location>
</feature>
<feature type="compositionally biased region" description="Polar residues" evidence="5">
    <location>
        <begin position="469"/>
        <end position="481"/>
    </location>
</feature>
<feature type="compositionally biased region" description="Basic and acidic residues" evidence="5">
    <location>
        <begin position="1545"/>
        <end position="1566"/>
    </location>
</feature>
<feature type="compositionally biased region" description="Polar residues" evidence="5">
    <location>
        <begin position="1585"/>
        <end position="1594"/>
    </location>
</feature>
<feature type="compositionally biased region" description="Low complexity" evidence="5">
    <location>
        <begin position="1627"/>
        <end position="1641"/>
    </location>
</feature>
<feature type="compositionally biased region" description="Basic and acidic residues" evidence="5">
    <location>
        <begin position="1648"/>
        <end position="1666"/>
    </location>
</feature>
<feature type="modified residue" description="Asymmetric dimethylarginine" evidence="1">
    <location>
        <position position="501"/>
    </location>
</feature>
<feature type="modified residue" description="Phosphoserine" evidence="3">
    <location>
        <position position="1527"/>
    </location>
</feature>
<gene>
    <name type="primary">CTTNBP2</name>
    <name type="synonym">CORTBP2</name>
</gene>